<keyword id="KW-1185">Reference proteome</keyword>
<keyword id="KW-0687">Ribonucleoprotein</keyword>
<keyword id="KW-0689">Ribosomal protein</keyword>
<sequence length="66" mass="7646">MAMVKIKDGESFESAFRKFKKSCEKAGILSEVKKRENFEKPSVRLKKKSIAARKRAVKKSRKGWND</sequence>
<comment type="similarity">
    <text evidence="1">Belongs to the bacterial ribosomal protein bS21 family.</text>
</comment>
<gene>
    <name evidence="1" type="primary">rpsU</name>
    <name type="ordered locus">Bd0239</name>
</gene>
<proteinExistence type="inferred from homology"/>
<reference key="1">
    <citation type="journal article" date="2004" name="Science">
        <title>A predator unmasked: life cycle of Bdellovibrio bacteriovorus from a genomic perspective.</title>
        <authorList>
            <person name="Rendulic S."/>
            <person name="Jagtap P."/>
            <person name="Rosinus A."/>
            <person name="Eppinger M."/>
            <person name="Baar C."/>
            <person name="Lanz C."/>
            <person name="Keller H."/>
            <person name="Lambert C."/>
            <person name="Evans K.J."/>
            <person name="Goesmann A."/>
            <person name="Meyer F."/>
            <person name="Sockett R.E."/>
            <person name="Schuster S.C."/>
        </authorList>
    </citation>
    <scope>NUCLEOTIDE SEQUENCE [LARGE SCALE GENOMIC DNA]</scope>
    <source>
        <strain>ATCC 15356 / DSM 50701 / NCIMB 9529 / HD100</strain>
    </source>
</reference>
<name>RS21_BDEBA</name>
<protein>
    <recommendedName>
        <fullName evidence="1">Small ribosomal subunit protein bS21</fullName>
    </recommendedName>
    <alternativeName>
        <fullName evidence="2">30S ribosomal protein S21</fullName>
    </alternativeName>
</protein>
<organism>
    <name type="scientific">Bdellovibrio bacteriovorus (strain ATCC 15356 / DSM 50701 / NCIMB 9529 / HD100)</name>
    <dbReference type="NCBI Taxonomy" id="264462"/>
    <lineage>
        <taxon>Bacteria</taxon>
        <taxon>Pseudomonadati</taxon>
        <taxon>Bdellovibrionota</taxon>
        <taxon>Bdellovibrionia</taxon>
        <taxon>Bdellovibrionales</taxon>
        <taxon>Pseudobdellovibrionaceae</taxon>
        <taxon>Bdellovibrio</taxon>
    </lineage>
</organism>
<dbReference type="EMBL" id="BX842646">
    <property type="protein sequence ID" value="CAE77898.1"/>
    <property type="molecule type" value="Genomic_DNA"/>
</dbReference>
<dbReference type="SMR" id="Q6MR60"/>
<dbReference type="STRING" id="264462.Bd0239"/>
<dbReference type="KEGG" id="bba:Bd0239"/>
<dbReference type="eggNOG" id="COG0828">
    <property type="taxonomic scope" value="Bacteria"/>
</dbReference>
<dbReference type="HOGENOM" id="CLU_159258_1_2_7"/>
<dbReference type="Proteomes" id="UP000008080">
    <property type="component" value="Chromosome"/>
</dbReference>
<dbReference type="GO" id="GO:1990904">
    <property type="term" value="C:ribonucleoprotein complex"/>
    <property type="evidence" value="ECO:0007669"/>
    <property type="project" value="UniProtKB-KW"/>
</dbReference>
<dbReference type="GO" id="GO:0005840">
    <property type="term" value="C:ribosome"/>
    <property type="evidence" value="ECO:0007669"/>
    <property type="project" value="UniProtKB-KW"/>
</dbReference>
<dbReference type="GO" id="GO:0003735">
    <property type="term" value="F:structural constituent of ribosome"/>
    <property type="evidence" value="ECO:0007669"/>
    <property type="project" value="InterPro"/>
</dbReference>
<dbReference type="GO" id="GO:0006412">
    <property type="term" value="P:translation"/>
    <property type="evidence" value="ECO:0007669"/>
    <property type="project" value="UniProtKB-UniRule"/>
</dbReference>
<dbReference type="Gene3D" id="1.20.5.1150">
    <property type="entry name" value="Ribosomal protein S8"/>
    <property type="match status" value="1"/>
</dbReference>
<dbReference type="HAMAP" id="MF_00358">
    <property type="entry name" value="Ribosomal_bS21"/>
    <property type="match status" value="1"/>
</dbReference>
<dbReference type="InterPro" id="IPR001911">
    <property type="entry name" value="Ribosomal_bS21"/>
</dbReference>
<dbReference type="InterPro" id="IPR038380">
    <property type="entry name" value="Ribosomal_bS21_sf"/>
</dbReference>
<dbReference type="NCBIfam" id="TIGR00030">
    <property type="entry name" value="S21p"/>
    <property type="match status" value="1"/>
</dbReference>
<dbReference type="PANTHER" id="PTHR21109">
    <property type="entry name" value="MITOCHONDRIAL 28S RIBOSOMAL PROTEIN S21"/>
    <property type="match status" value="1"/>
</dbReference>
<dbReference type="PANTHER" id="PTHR21109:SF22">
    <property type="entry name" value="SMALL RIBOSOMAL SUBUNIT PROTEIN BS21"/>
    <property type="match status" value="1"/>
</dbReference>
<dbReference type="Pfam" id="PF01165">
    <property type="entry name" value="Ribosomal_S21"/>
    <property type="match status" value="1"/>
</dbReference>
<dbReference type="PRINTS" id="PR00976">
    <property type="entry name" value="RIBOSOMALS21"/>
</dbReference>
<accession>Q6MR60</accession>
<evidence type="ECO:0000255" key="1">
    <source>
        <dbReference type="HAMAP-Rule" id="MF_00358"/>
    </source>
</evidence>
<evidence type="ECO:0000305" key="2"/>
<feature type="chain" id="PRO_0000178304" description="Small ribosomal subunit protein bS21">
    <location>
        <begin position="1"/>
        <end position="66"/>
    </location>
</feature>